<organism>
    <name type="scientific">Streptococcus pneumoniae (strain Hungary19A-6)</name>
    <dbReference type="NCBI Taxonomy" id="487214"/>
    <lineage>
        <taxon>Bacteria</taxon>
        <taxon>Bacillati</taxon>
        <taxon>Bacillota</taxon>
        <taxon>Bacilli</taxon>
        <taxon>Lactobacillales</taxon>
        <taxon>Streptococcaceae</taxon>
        <taxon>Streptococcus</taxon>
    </lineage>
</organism>
<feature type="chain" id="PRO_1000119763" description="Chaperone protein DnaK">
    <location>
        <begin position="1"/>
        <end position="607"/>
    </location>
</feature>
<feature type="region of interest" description="Disordered" evidence="2">
    <location>
        <begin position="580"/>
        <end position="607"/>
    </location>
</feature>
<feature type="compositionally biased region" description="Low complexity" evidence="2">
    <location>
        <begin position="580"/>
        <end position="591"/>
    </location>
</feature>
<feature type="compositionally biased region" description="Acidic residues" evidence="2">
    <location>
        <begin position="598"/>
        <end position="607"/>
    </location>
</feature>
<feature type="modified residue" description="Phosphothreonine; by autocatalysis" evidence="1">
    <location>
        <position position="173"/>
    </location>
</feature>
<evidence type="ECO:0000255" key="1">
    <source>
        <dbReference type="HAMAP-Rule" id="MF_00332"/>
    </source>
</evidence>
<evidence type="ECO:0000256" key="2">
    <source>
        <dbReference type="SAM" id="MobiDB-lite"/>
    </source>
</evidence>
<gene>
    <name evidence="1" type="primary">dnaK</name>
    <name type="ordered locus">SPH_0624</name>
</gene>
<dbReference type="EMBL" id="CP000936">
    <property type="protein sequence ID" value="ACA35607.1"/>
    <property type="molecule type" value="Genomic_DNA"/>
</dbReference>
<dbReference type="RefSeq" id="WP_000034662.1">
    <property type="nucleotide sequence ID" value="NC_010380.1"/>
</dbReference>
<dbReference type="SMR" id="B1IA52"/>
<dbReference type="GeneID" id="45654055"/>
<dbReference type="KEGG" id="spv:SPH_0624"/>
<dbReference type="HOGENOM" id="CLU_005965_2_4_9"/>
<dbReference type="Proteomes" id="UP000002163">
    <property type="component" value="Chromosome"/>
</dbReference>
<dbReference type="GO" id="GO:0005524">
    <property type="term" value="F:ATP binding"/>
    <property type="evidence" value="ECO:0007669"/>
    <property type="project" value="UniProtKB-UniRule"/>
</dbReference>
<dbReference type="GO" id="GO:0140662">
    <property type="term" value="F:ATP-dependent protein folding chaperone"/>
    <property type="evidence" value="ECO:0007669"/>
    <property type="project" value="InterPro"/>
</dbReference>
<dbReference type="GO" id="GO:0051082">
    <property type="term" value="F:unfolded protein binding"/>
    <property type="evidence" value="ECO:0007669"/>
    <property type="project" value="InterPro"/>
</dbReference>
<dbReference type="CDD" id="cd10234">
    <property type="entry name" value="ASKHA_NBD_HSP70_DnaK-like"/>
    <property type="match status" value="1"/>
</dbReference>
<dbReference type="FunFam" id="2.60.34.10:FF:000014">
    <property type="entry name" value="Chaperone protein DnaK HSP70"/>
    <property type="match status" value="1"/>
</dbReference>
<dbReference type="FunFam" id="1.20.1270.10:FF:000004">
    <property type="entry name" value="Molecular chaperone DnaK"/>
    <property type="match status" value="1"/>
</dbReference>
<dbReference type="FunFam" id="3.30.420.40:FF:000071">
    <property type="entry name" value="Molecular chaperone DnaK"/>
    <property type="match status" value="1"/>
</dbReference>
<dbReference type="FunFam" id="3.90.640.10:FF:000003">
    <property type="entry name" value="Molecular chaperone DnaK"/>
    <property type="match status" value="1"/>
</dbReference>
<dbReference type="Gene3D" id="1.20.1270.10">
    <property type="match status" value="1"/>
</dbReference>
<dbReference type="Gene3D" id="3.30.420.40">
    <property type="match status" value="2"/>
</dbReference>
<dbReference type="Gene3D" id="3.90.640.10">
    <property type="entry name" value="Actin, Chain A, domain 4"/>
    <property type="match status" value="1"/>
</dbReference>
<dbReference type="Gene3D" id="2.60.34.10">
    <property type="entry name" value="Substrate Binding Domain Of DNAk, Chain A, domain 1"/>
    <property type="match status" value="1"/>
</dbReference>
<dbReference type="HAMAP" id="MF_00332">
    <property type="entry name" value="DnaK"/>
    <property type="match status" value="1"/>
</dbReference>
<dbReference type="InterPro" id="IPR043129">
    <property type="entry name" value="ATPase_NBD"/>
</dbReference>
<dbReference type="InterPro" id="IPR012725">
    <property type="entry name" value="Chaperone_DnaK"/>
</dbReference>
<dbReference type="InterPro" id="IPR018181">
    <property type="entry name" value="Heat_shock_70_CS"/>
</dbReference>
<dbReference type="InterPro" id="IPR029048">
    <property type="entry name" value="HSP70_C_sf"/>
</dbReference>
<dbReference type="InterPro" id="IPR029047">
    <property type="entry name" value="HSP70_peptide-bd_sf"/>
</dbReference>
<dbReference type="InterPro" id="IPR013126">
    <property type="entry name" value="Hsp_70_fam"/>
</dbReference>
<dbReference type="NCBIfam" id="NF001413">
    <property type="entry name" value="PRK00290.1"/>
    <property type="match status" value="1"/>
</dbReference>
<dbReference type="NCBIfam" id="TIGR02350">
    <property type="entry name" value="prok_dnaK"/>
    <property type="match status" value="1"/>
</dbReference>
<dbReference type="PANTHER" id="PTHR19375">
    <property type="entry name" value="HEAT SHOCK PROTEIN 70KDA"/>
    <property type="match status" value="1"/>
</dbReference>
<dbReference type="Pfam" id="PF00012">
    <property type="entry name" value="HSP70"/>
    <property type="match status" value="1"/>
</dbReference>
<dbReference type="PRINTS" id="PR00301">
    <property type="entry name" value="HEATSHOCK70"/>
</dbReference>
<dbReference type="SUPFAM" id="SSF53067">
    <property type="entry name" value="Actin-like ATPase domain"/>
    <property type="match status" value="2"/>
</dbReference>
<dbReference type="SUPFAM" id="SSF100934">
    <property type="entry name" value="Heat shock protein 70kD (HSP70), C-terminal subdomain"/>
    <property type="match status" value="1"/>
</dbReference>
<dbReference type="SUPFAM" id="SSF100920">
    <property type="entry name" value="Heat shock protein 70kD (HSP70), peptide-binding domain"/>
    <property type="match status" value="1"/>
</dbReference>
<dbReference type="PROSITE" id="PS00297">
    <property type="entry name" value="HSP70_1"/>
    <property type="match status" value="1"/>
</dbReference>
<dbReference type="PROSITE" id="PS00329">
    <property type="entry name" value="HSP70_2"/>
    <property type="match status" value="1"/>
</dbReference>
<dbReference type="PROSITE" id="PS01036">
    <property type="entry name" value="HSP70_3"/>
    <property type="match status" value="1"/>
</dbReference>
<proteinExistence type="inferred from homology"/>
<reference key="1">
    <citation type="journal article" date="2010" name="Genome Biol.">
        <title>Structure and dynamics of the pan-genome of Streptococcus pneumoniae and closely related species.</title>
        <authorList>
            <person name="Donati C."/>
            <person name="Hiller N.L."/>
            <person name="Tettelin H."/>
            <person name="Muzzi A."/>
            <person name="Croucher N.J."/>
            <person name="Angiuoli S.V."/>
            <person name="Oggioni M."/>
            <person name="Dunning Hotopp J.C."/>
            <person name="Hu F.Z."/>
            <person name="Riley D.R."/>
            <person name="Covacci A."/>
            <person name="Mitchell T.J."/>
            <person name="Bentley S.D."/>
            <person name="Kilian M."/>
            <person name="Ehrlich G.D."/>
            <person name="Rappuoli R."/>
            <person name="Moxon E.R."/>
            <person name="Masignani V."/>
        </authorList>
    </citation>
    <scope>NUCLEOTIDE SEQUENCE [LARGE SCALE GENOMIC DNA]</scope>
    <source>
        <strain>Hungary19A-6</strain>
    </source>
</reference>
<accession>B1IA52</accession>
<name>DNAK_STRPI</name>
<keyword id="KW-0067">ATP-binding</keyword>
<keyword id="KW-0143">Chaperone</keyword>
<keyword id="KW-0547">Nucleotide-binding</keyword>
<keyword id="KW-0597">Phosphoprotein</keyword>
<keyword id="KW-0346">Stress response</keyword>
<sequence length="607" mass="64812">MSKIIGIDLGTTNSAVAVLEGTESKIIANPEGNRTTPSVVSFKNGEIIVGDAAKRQAVTNPDTVISIKSKMGTSEKVSANGKEYTPQEISAMILQYLKGYAEDYLGEKVTKAVITVPAYFNDAQRQATKDAGKIAGLEVERIVNEPTAAALAYGLDKTDKEEKILVFDLGGGTFDVSILELGDGVFDVLSTAGDNKLGGDDFDQKIIDHLVAEFKKENGIDLSTDKMAMQRLKDAAEKAKKDLSGVTSTQISLPFITAGEAGPLHLEMTLTRAKFDDLTRDLVERTKVPVRQALSDAGLSLSEIDEVILVGGSTRIPAVVEAVKAETGKEPNKSVNPDEVVAMGAAIQGGVITGDVKDVVLLDVTPLSLGIETMGGVFTKLIDRNTTIPTSKSQVFSTAADNQPAVDIHVLQGERPMAADNKTLGRFQLTDIPAAPRGIPQIEVTFDIDKNGIVSVKAKDLGTQKEQTIVIQSNSGLTDEEIDRMMKDAEANAEADKKRKEEVDLRNEVDQAIFATEKTIKETEGKGFDAERDAAQAALDDLKKAQEDNNLDDMKAKLEALNEKAQGLAVKLYEQAAAAQQAQEGAEGAQATGNAGDDVVDGEFTEK</sequence>
<comment type="function">
    <text evidence="1">Acts as a chaperone.</text>
</comment>
<comment type="induction">
    <text evidence="1">By stress conditions e.g. heat shock.</text>
</comment>
<comment type="similarity">
    <text evidence="1">Belongs to the heat shock protein 70 family.</text>
</comment>
<protein>
    <recommendedName>
        <fullName evidence="1">Chaperone protein DnaK</fullName>
    </recommendedName>
    <alternativeName>
        <fullName evidence="1">HSP70</fullName>
    </alternativeName>
    <alternativeName>
        <fullName evidence="1">Heat shock 70 kDa protein</fullName>
    </alternativeName>
    <alternativeName>
        <fullName evidence="1">Heat shock protein 70</fullName>
    </alternativeName>
</protein>